<accession>Q9H5Z6</accession>
<accession>A6NNC7</accession>
<accession>Q8NBZ4</accession>
<accession>Q8TAV7</accession>
<keyword id="KW-0025">Alternative splicing</keyword>
<keyword id="KW-0539">Nucleus</keyword>
<keyword id="KW-0597">Phosphoprotein</keyword>
<keyword id="KW-1267">Proteomics identification</keyword>
<keyword id="KW-1185">Reference proteome</keyword>
<gene>
    <name type="primary">FAM124B</name>
</gene>
<sequence>MDETQGPLAMTVHLLANSGHGSLLQRTLDQLLDCICPEVRLFQVSERASPVKYCEKSHSKRSRFPGMSVLLFLHESPGEDRLFRVLDSLQHSPWQCYPTQDTRGRLCPYFFANQEFYSLDSQLPIWGVRQVHCGSEILRVTLYCSFDNYEDAIRLYEMILQREATLQKSNFCFFVLYASKSFALQLSLKQLPPGMSVDPKESSVLQFKVQEIGQLVPLLPNPCMPISSTRWQTQDYDGNKILLQVQLNPELGVKNGILGAGMLPLGSRLTSVSAKRTSEPRSQRNQGKRSQGHSLELPEPSGSPTSDRCAGTSWKSPGRSFQVSSPAMGAHLHLSSHHLESGARMKVLNRENSFQKLEAETNVDTGLTIINSEPRQTYFGGFPRDLQTSQPPFCLPASSLGVATSKNNSVLKERVSPLPLAGQRDLGTRKTISECLLHLQVQGEEKEEDEEEFFI</sequence>
<protein>
    <recommendedName>
        <fullName>Protein FAM124B</fullName>
    </recommendedName>
</protein>
<evidence type="ECO:0000256" key="1">
    <source>
        <dbReference type="SAM" id="MobiDB-lite"/>
    </source>
</evidence>
<evidence type="ECO:0000269" key="2">
    <source>
    </source>
</evidence>
<evidence type="ECO:0000303" key="3">
    <source>
    </source>
</evidence>
<evidence type="ECO:0000303" key="4">
    <source>
    </source>
</evidence>
<evidence type="ECO:0000305" key="5"/>
<evidence type="ECO:0007744" key="6">
    <source>
    </source>
</evidence>
<reference key="1">
    <citation type="journal article" date="2004" name="Nat. Genet.">
        <title>Complete sequencing and characterization of 21,243 full-length human cDNAs.</title>
        <authorList>
            <person name="Ota T."/>
            <person name="Suzuki Y."/>
            <person name="Nishikawa T."/>
            <person name="Otsuki T."/>
            <person name="Sugiyama T."/>
            <person name="Irie R."/>
            <person name="Wakamatsu A."/>
            <person name="Hayashi K."/>
            <person name="Sato H."/>
            <person name="Nagai K."/>
            <person name="Kimura K."/>
            <person name="Makita H."/>
            <person name="Sekine M."/>
            <person name="Obayashi M."/>
            <person name="Nishi T."/>
            <person name="Shibahara T."/>
            <person name="Tanaka T."/>
            <person name="Ishii S."/>
            <person name="Yamamoto J."/>
            <person name="Saito K."/>
            <person name="Kawai Y."/>
            <person name="Isono Y."/>
            <person name="Nakamura Y."/>
            <person name="Nagahari K."/>
            <person name="Murakami K."/>
            <person name="Yasuda T."/>
            <person name="Iwayanagi T."/>
            <person name="Wagatsuma M."/>
            <person name="Shiratori A."/>
            <person name="Sudo H."/>
            <person name="Hosoiri T."/>
            <person name="Kaku Y."/>
            <person name="Kodaira H."/>
            <person name="Kondo H."/>
            <person name="Sugawara M."/>
            <person name="Takahashi M."/>
            <person name="Kanda K."/>
            <person name="Yokoi T."/>
            <person name="Furuya T."/>
            <person name="Kikkawa E."/>
            <person name="Omura Y."/>
            <person name="Abe K."/>
            <person name="Kamihara K."/>
            <person name="Katsuta N."/>
            <person name="Sato K."/>
            <person name="Tanikawa M."/>
            <person name="Yamazaki M."/>
            <person name="Ninomiya K."/>
            <person name="Ishibashi T."/>
            <person name="Yamashita H."/>
            <person name="Murakawa K."/>
            <person name="Fujimori K."/>
            <person name="Tanai H."/>
            <person name="Kimata M."/>
            <person name="Watanabe M."/>
            <person name="Hiraoka S."/>
            <person name="Chiba Y."/>
            <person name="Ishida S."/>
            <person name="Ono Y."/>
            <person name="Takiguchi S."/>
            <person name="Watanabe S."/>
            <person name="Yosida M."/>
            <person name="Hotuta T."/>
            <person name="Kusano J."/>
            <person name="Kanehori K."/>
            <person name="Takahashi-Fujii A."/>
            <person name="Hara H."/>
            <person name="Tanase T.-O."/>
            <person name="Nomura Y."/>
            <person name="Togiya S."/>
            <person name="Komai F."/>
            <person name="Hara R."/>
            <person name="Takeuchi K."/>
            <person name="Arita M."/>
            <person name="Imose N."/>
            <person name="Musashino K."/>
            <person name="Yuuki H."/>
            <person name="Oshima A."/>
            <person name="Sasaki N."/>
            <person name="Aotsuka S."/>
            <person name="Yoshikawa Y."/>
            <person name="Matsunawa H."/>
            <person name="Ichihara T."/>
            <person name="Shiohata N."/>
            <person name="Sano S."/>
            <person name="Moriya S."/>
            <person name="Momiyama H."/>
            <person name="Satoh N."/>
            <person name="Takami S."/>
            <person name="Terashima Y."/>
            <person name="Suzuki O."/>
            <person name="Nakagawa S."/>
            <person name="Senoh A."/>
            <person name="Mizoguchi H."/>
            <person name="Goto Y."/>
            <person name="Shimizu F."/>
            <person name="Wakebe H."/>
            <person name="Hishigaki H."/>
            <person name="Watanabe T."/>
            <person name="Sugiyama A."/>
            <person name="Takemoto M."/>
            <person name="Kawakami B."/>
            <person name="Yamazaki M."/>
            <person name="Watanabe K."/>
            <person name="Kumagai A."/>
            <person name="Itakura S."/>
            <person name="Fukuzumi Y."/>
            <person name="Fujimori Y."/>
            <person name="Komiyama M."/>
            <person name="Tashiro H."/>
            <person name="Tanigami A."/>
            <person name="Fujiwara T."/>
            <person name="Ono T."/>
            <person name="Yamada K."/>
            <person name="Fujii Y."/>
            <person name="Ozaki K."/>
            <person name="Hirao M."/>
            <person name="Ohmori Y."/>
            <person name="Kawabata A."/>
            <person name="Hikiji T."/>
            <person name="Kobatake N."/>
            <person name="Inagaki H."/>
            <person name="Ikema Y."/>
            <person name="Okamoto S."/>
            <person name="Okitani R."/>
            <person name="Kawakami T."/>
            <person name="Noguchi S."/>
            <person name="Itoh T."/>
            <person name="Shigeta K."/>
            <person name="Senba T."/>
            <person name="Matsumura K."/>
            <person name="Nakajima Y."/>
            <person name="Mizuno T."/>
            <person name="Morinaga M."/>
            <person name="Sasaki M."/>
            <person name="Togashi T."/>
            <person name="Oyama M."/>
            <person name="Hata H."/>
            <person name="Watanabe M."/>
            <person name="Komatsu T."/>
            <person name="Mizushima-Sugano J."/>
            <person name="Satoh T."/>
            <person name="Shirai Y."/>
            <person name="Takahashi Y."/>
            <person name="Nakagawa K."/>
            <person name="Okumura K."/>
            <person name="Nagase T."/>
            <person name="Nomura N."/>
            <person name="Kikuchi H."/>
            <person name="Masuho Y."/>
            <person name="Yamashita R."/>
            <person name="Nakai K."/>
            <person name="Yada T."/>
            <person name="Nakamura Y."/>
            <person name="Ohara O."/>
            <person name="Isogai T."/>
            <person name="Sugano S."/>
        </authorList>
    </citation>
    <scope>NUCLEOTIDE SEQUENCE [LARGE SCALE MRNA] (ISOFORM 1)</scope>
    <scope>NUCLEOTIDE SEQUENCE [LARGE SCALE MRNA] OF 92-455 (ISOFORM 2)</scope>
    <source>
        <tissue>Placenta</tissue>
        <tissue>Umbilical vein endothelial cell</tissue>
    </source>
</reference>
<reference key="2">
    <citation type="journal article" date="2005" name="Nature">
        <title>Generation and annotation of the DNA sequences of human chromosomes 2 and 4.</title>
        <authorList>
            <person name="Hillier L.W."/>
            <person name="Graves T.A."/>
            <person name="Fulton R.S."/>
            <person name="Fulton L.A."/>
            <person name="Pepin K.H."/>
            <person name="Minx P."/>
            <person name="Wagner-McPherson C."/>
            <person name="Layman D."/>
            <person name="Wylie K."/>
            <person name="Sekhon M."/>
            <person name="Becker M.C."/>
            <person name="Fewell G.A."/>
            <person name="Delehaunty K.D."/>
            <person name="Miner T.L."/>
            <person name="Nash W.E."/>
            <person name="Kremitzki C."/>
            <person name="Oddy L."/>
            <person name="Du H."/>
            <person name="Sun H."/>
            <person name="Bradshaw-Cordum H."/>
            <person name="Ali J."/>
            <person name="Carter J."/>
            <person name="Cordes M."/>
            <person name="Harris A."/>
            <person name="Isak A."/>
            <person name="van Brunt A."/>
            <person name="Nguyen C."/>
            <person name="Du F."/>
            <person name="Courtney L."/>
            <person name="Kalicki J."/>
            <person name="Ozersky P."/>
            <person name="Abbott S."/>
            <person name="Armstrong J."/>
            <person name="Belter E.A."/>
            <person name="Caruso L."/>
            <person name="Cedroni M."/>
            <person name="Cotton M."/>
            <person name="Davidson T."/>
            <person name="Desai A."/>
            <person name="Elliott G."/>
            <person name="Erb T."/>
            <person name="Fronick C."/>
            <person name="Gaige T."/>
            <person name="Haakenson W."/>
            <person name="Haglund K."/>
            <person name="Holmes A."/>
            <person name="Harkins R."/>
            <person name="Kim K."/>
            <person name="Kruchowski S.S."/>
            <person name="Strong C.M."/>
            <person name="Grewal N."/>
            <person name="Goyea E."/>
            <person name="Hou S."/>
            <person name="Levy A."/>
            <person name="Martinka S."/>
            <person name="Mead K."/>
            <person name="McLellan M.D."/>
            <person name="Meyer R."/>
            <person name="Randall-Maher J."/>
            <person name="Tomlinson C."/>
            <person name="Dauphin-Kohlberg S."/>
            <person name="Kozlowicz-Reilly A."/>
            <person name="Shah N."/>
            <person name="Swearengen-Shahid S."/>
            <person name="Snider J."/>
            <person name="Strong J.T."/>
            <person name="Thompson J."/>
            <person name="Yoakum M."/>
            <person name="Leonard S."/>
            <person name="Pearman C."/>
            <person name="Trani L."/>
            <person name="Radionenko M."/>
            <person name="Waligorski J.E."/>
            <person name="Wang C."/>
            <person name="Rock S.M."/>
            <person name="Tin-Wollam A.-M."/>
            <person name="Maupin R."/>
            <person name="Latreille P."/>
            <person name="Wendl M.C."/>
            <person name="Yang S.-P."/>
            <person name="Pohl C."/>
            <person name="Wallis J.W."/>
            <person name="Spieth J."/>
            <person name="Bieri T.A."/>
            <person name="Berkowicz N."/>
            <person name="Nelson J.O."/>
            <person name="Osborne J."/>
            <person name="Ding L."/>
            <person name="Meyer R."/>
            <person name="Sabo A."/>
            <person name="Shotland Y."/>
            <person name="Sinha P."/>
            <person name="Wohldmann P.E."/>
            <person name="Cook L.L."/>
            <person name="Hickenbotham M.T."/>
            <person name="Eldred J."/>
            <person name="Williams D."/>
            <person name="Jones T.A."/>
            <person name="She X."/>
            <person name="Ciccarelli F.D."/>
            <person name="Izaurralde E."/>
            <person name="Taylor J."/>
            <person name="Schmutz J."/>
            <person name="Myers R.M."/>
            <person name="Cox D.R."/>
            <person name="Huang X."/>
            <person name="McPherson J.D."/>
            <person name="Mardis E.R."/>
            <person name="Clifton S.W."/>
            <person name="Warren W.C."/>
            <person name="Chinwalla A.T."/>
            <person name="Eddy S.R."/>
            <person name="Marra M.A."/>
            <person name="Ovcharenko I."/>
            <person name="Furey T.S."/>
            <person name="Miller W."/>
            <person name="Eichler E.E."/>
            <person name="Bork P."/>
            <person name="Suyama M."/>
            <person name="Torrents D."/>
            <person name="Waterston R.H."/>
            <person name="Wilson R.K."/>
        </authorList>
    </citation>
    <scope>NUCLEOTIDE SEQUENCE [LARGE SCALE GENOMIC DNA]</scope>
</reference>
<reference key="3">
    <citation type="submission" date="2005-07" db="EMBL/GenBank/DDBJ databases">
        <authorList>
            <person name="Mural R.J."/>
            <person name="Istrail S."/>
            <person name="Sutton G.G."/>
            <person name="Florea L."/>
            <person name="Halpern A.L."/>
            <person name="Mobarry C.M."/>
            <person name="Lippert R."/>
            <person name="Walenz B."/>
            <person name="Shatkay H."/>
            <person name="Dew I."/>
            <person name="Miller J.R."/>
            <person name="Flanigan M.J."/>
            <person name="Edwards N.J."/>
            <person name="Bolanos R."/>
            <person name="Fasulo D."/>
            <person name="Halldorsson B.V."/>
            <person name="Hannenhalli S."/>
            <person name="Turner R."/>
            <person name="Yooseph S."/>
            <person name="Lu F."/>
            <person name="Nusskern D.R."/>
            <person name="Shue B.C."/>
            <person name="Zheng X.H."/>
            <person name="Zhong F."/>
            <person name="Delcher A.L."/>
            <person name="Huson D.H."/>
            <person name="Kravitz S.A."/>
            <person name="Mouchard L."/>
            <person name="Reinert K."/>
            <person name="Remington K.A."/>
            <person name="Clark A.G."/>
            <person name="Waterman M.S."/>
            <person name="Eichler E.E."/>
            <person name="Adams M.D."/>
            <person name="Hunkapiller M.W."/>
            <person name="Myers E.W."/>
            <person name="Venter J.C."/>
        </authorList>
    </citation>
    <scope>NUCLEOTIDE SEQUENCE [LARGE SCALE GENOMIC DNA]</scope>
</reference>
<reference key="4">
    <citation type="journal article" date="2004" name="Genome Res.">
        <title>The status, quality, and expansion of the NIH full-length cDNA project: the Mammalian Gene Collection (MGC).</title>
        <authorList>
            <consortium name="The MGC Project Team"/>
        </authorList>
    </citation>
    <scope>NUCLEOTIDE SEQUENCE [LARGE SCALE MRNA] (ISOFORM 2)</scope>
    <source>
        <tissue>Lung</tissue>
    </source>
</reference>
<reference key="5">
    <citation type="journal article" date="2012" name="PLoS ONE">
        <title>Identification and characterization of FAM124B as a novel component of a CHD7 and CHD8 containing complex.</title>
        <authorList>
            <person name="Batsukh T."/>
            <person name="Schulz Y."/>
            <person name="Wolf S."/>
            <person name="Rabe T.I."/>
            <person name="Oellerich T."/>
            <person name="Urlaub H."/>
            <person name="Schaefer I.M."/>
            <person name="Pauli S."/>
        </authorList>
    </citation>
    <scope>INTERACTION WITH CHD7 AND CHD8</scope>
    <scope>SUBCELLULAR LOCATION</scope>
    <scope>IDENTIFICATION BY MASS SPECTROMETRY</scope>
</reference>
<reference key="6">
    <citation type="journal article" date="2013" name="J. Proteome Res.">
        <title>Toward a comprehensive characterization of a human cancer cell phosphoproteome.</title>
        <authorList>
            <person name="Zhou H."/>
            <person name="Di Palma S."/>
            <person name="Preisinger C."/>
            <person name="Peng M."/>
            <person name="Polat A.N."/>
            <person name="Heck A.J."/>
            <person name="Mohammed S."/>
        </authorList>
    </citation>
    <scope>PHOSPHORYLATION [LARGE SCALE ANALYSIS] AT SER-49</scope>
    <scope>IDENTIFICATION BY MASS SPECTROMETRY [LARGE SCALE ANALYSIS]</scope>
    <source>
        <tissue>Erythroleukemia</tissue>
    </source>
</reference>
<proteinExistence type="evidence at protein level"/>
<name>F124B_HUMAN</name>
<feature type="chain" id="PRO_0000286384" description="Protein FAM124B">
    <location>
        <begin position="1"/>
        <end position="455"/>
    </location>
</feature>
<feature type="region of interest" description="Disordered" evidence="1">
    <location>
        <begin position="270"/>
        <end position="322"/>
    </location>
</feature>
<feature type="compositionally biased region" description="Polar residues" evidence="1">
    <location>
        <begin position="313"/>
        <end position="322"/>
    </location>
</feature>
<feature type="modified residue" description="Phosphoserine" evidence="6">
    <location>
        <position position="49"/>
    </location>
</feature>
<feature type="splice variant" id="VSP_025042" description="In isoform 2." evidence="3 4">
    <original>VQLNPELGVKNGILGAGMLPLGSRLTSV</original>
    <variation>RWESSSVAQTRVRWCHHSSLRSSPSGFK</variation>
    <location>
        <begin position="245"/>
        <end position="272"/>
    </location>
</feature>
<feature type="splice variant" id="VSP_025043" description="In isoform 2." evidence="3 4">
    <location>
        <begin position="273"/>
        <end position="455"/>
    </location>
</feature>
<feature type="sequence variant" id="VAR_060151" description="In dbSNP:rs3738954.">
    <original>I</original>
    <variation>T</variation>
    <location>
        <position position="257"/>
    </location>
</feature>
<feature type="sequence conflict" description="In Ref. 1; BAB15471." evidence="5" ref="1">
    <original>SRF</original>
    <variation>YRL</variation>
    <location>
        <begin position="62"/>
        <end position="64"/>
    </location>
</feature>
<feature type="sequence conflict" description="In Ref. 1; BAB15471." evidence="5" ref="1">
    <original>P</original>
    <variation>S</variation>
    <location>
        <position position="264"/>
    </location>
</feature>
<feature type="sequence conflict" description="In Ref. 1; BAB15471." evidence="5" ref="1">
    <original>R</original>
    <variation>G</variation>
    <location>
        <position position="429"/>
    </location>
</feature>
<organism>
    <name type="scientific">Homo sapiens</name>
    <name type="common">Human</name>
    <dbReference type="NCBI Taxonomy" id="9606"/>
    <lineage>
        <taxon>Eukaryota</taxon>
        <taxon>Metazoa</taxon>
        <taxon>Chordata</taxon>
        <taxon>Craniata</taxon>
        <taxon>Vertebrata</taxon>
        <taxon>Euteleostomi</taxon>
        <taxon>Mammalia</taxon>
        <taxon>Eutheria</taxon>
        <taxon>Euarchontoglires</taxon>
        <taxon>Primates</taxon>
        <taxon>Haplorrhini</taxon>
        <taxon>Catarrhini</taxon>
        <taxon>Hominidae</taxon>
        <taxon>Homo</taxon>
    </lineage>
</organism>
<dbReference type="EMBL" id="AK026399">
    <property type="protein sequence ID" value="BAB15471.1"/>
    <property type="status" value="ALT_FRAME"/>
    <property type="molecule type" value="mRNA"/>
</dbReference>
<dbReference type="EMBL" id="AK075126">
    <property type="status" value="NOT_ANNOTATED_CDS"/>
    <property type="molecule type" value="mRNA"/>
</dbReference>
<dbReference type="EMBL" id="AC008072">
    <property type="protein sequence ID" value="AAY14842.1"/>
    <property type="molecule type" value="Genomic_DNA"/>
</dbReference>
<dbReference type="EMBL" id="CH471063">
    <property type="protein sequence ID" value="EAW70827.1"/>
    <property type="molecule type" value="Genomic_DNA"/>
</dbReference>
<dbReference type="EMBL" id="BC025754">
    <property type="protein sequence ID" value="AAH25754.1"/>
    <property type="molecule type" value="mRNA"/>
</dbReference>
<dbReference type="CCDS" id="CCDS2461.1">
    <molecule id="Q9H5Z6-2"/>
</dbReference>
<dbReference type="CCDS" id="CCDS46527.1">
    <molecule id="Q9H5Z6-1"/>
</dbReference>
<dbReference type="RefSeq" id="NP_001116251.1">
    <molecule id="Q9H5Z6-1"/>
    <property type="nucleotide sequence ID" value="NM_001122779.2"/>
</dbReference>
<dbReference type="RefSeq" id="NP_079061.2">
    <molecule id="Q9H5Z6-2"/>
    <property type="nucleotide sequence ID" value="NM_024785.2"/>
</dbReference>
<dbReference type="RefSeq" id="XP_047301844.1">
    <molecule id="Q9H5Z6-2"/>
    <property type="nucleotide sequence ID" value="XM_047445888.1"/>
</dbReference>
<dbReference type="RefSeq" id="XP_054199969.1">
    <molecule id="Q9H5Z6-2"/>
    <property type="nucleotide sequence ID" value="XM_054343994.1"/>
</dbReference>
<dbReference type="SMR" id="Q9H5Z6"/>
<dbReference type="BioGRID" id="122934">
    <property type="interactions" value="73"/>
</dbReference>
<dbReference type="FunCoup" id="Q9H5Z6">
    <property type="interactions" value="1083"/>
</dbReference>
<dbReference type="IntAct" id="Q9H5Z6">
    <property type="interactions" value="74"/>
</dbReference>
<dbReference type="MINT" id="Q9H5Z6"/>
<dbReference type="STRING" id="9606.ENSP00000386895"/>
<dbReference type="iPTMnet" id="Q9H5Z6"/>
<dbReference type="PhosphoSitePlus" id="Q9H5Z6"/>
<dbReference type="BioMuta" id="FAM124B"/>
<dbReference type="DMDM" id="221222523"/>
<dbReference type="MassIVE" id="Q9H5Z6"/>
<dbReference type="PaxDb" id="9606-ENSP00000386895"/>
<dbReference type="PeptideAtlas" id="Q9H5Z6"/>
<dbReference type="ProteomicsDB" id="80943">
    <molecule id="Q9H5Z6-1"/>
</dbReference>
<dbReference type="Antibodypedia" id="47677">
    <property type="antibodies" value="63 antibodies from 15 providers"/>
</dbReference>
<dbReference type="DNASU" id="79843"/>
<dbReference type="Ensembl" id="ENST00000243806.2">
    <molecule id="Q9H5Z6-2"/>
    <property type="protein sequence ID" value="ENSP00000243806.2"/>
    <property type="gene ID" value="ENSG00000124019.10"/>
</dbReference>
<dbReference type="Ensembl" id="ENST00000389874.3">
    <molecule id="Q9H5Z6-2"/>
    <property type="protein sequence ID" value="ENSP00000374524.3"/>
    <property type="gene ID" value="ENSG00000124019.10"/>
</dbReference>
<dbReference type="Ensembl" id="ENST00000409685.4">
    <molecule id="Q9H5Z6-1"/>
    <property type="protein sequence ID" value="ENSP00000386895.3"/>
    <property type="gene ID" value="ENSG00000124019.10"/>
</dbReference>
<dbReference type="GeneID" id="79843"/>
<dbReference type="KEGG" id="hsa:79843"/>
<dbReference type="MANE-Select" id="ENST00000409685.4">
    <property type="protein sequence ID" value="ENSP00000386895.3"/>
    <property type="RefSeq nucleotide sequence ID" value="NM_001122779.2"/>
    <property type="RefSeq protein sequence ID" value="NP_001116251.1"/>
</dbReference>
<dbReference type="UCSC" id="uc002vnw.3">
    <molecule id="Q9H5Z6-1"/>
    <property type="organism name" value="human"/>
</dbReference>
<dbReference type="AGR" id="HGNC:26224"/>
<dbReference type="CTD" id="79843"/>
<dbReference type="DisGeNET" id="79843"/>
<dbReference type="GeneCards" id="FAM124B"/>
<dbReference type="HGNC" id="HGNC:26224">
    <property type="gene designation" value="FAM124B"/>
</dbReference>
<dbReference type="HPA" id="ENSG00000124019">
    <property type="expression patterns" value="Tissue enhanced (placenta)"/>
</dbReference>
<dbReference type="MIM" id="618403">
    <property type="type" value="gene"/>
</dbReference>
<dbReference type="neXtProt" id="NX_Q9H5Z6"/>
<dbReference type="OpenTargets" id="ENSG00000124019"/>
<dbReference type="PharmGKB" id="PA162385815"/>
<dbReference type="VEuPathDB" id="HostDB:ENSG00000124019"/>
<dbReference type="eggNOG" id="ENOG502QUJG">
    <property type="taxonomic scope" value="Eukaryota"/>
</dbReference>
<dbReference type="GeneTree" id="ENSGT00590000083134"/>
<dbReference type="HOGENOM" id="CLU_070689_0_0_1"/>
<dbReference type="InParanoid" id="Q9H5Z6"/>
<dbReference type="OMA" id="CCHSSLR"/>
<dbReference type="OrthoDB" id="10023686at2759"/>
<dbReference type="PAN-GO" id="Q9H5Z6">
    <property type="GO annotations" value="1 GO annotation based on evolutionary models"/>
</dbReference>
<dbReference type="PhylomeDB" id="Q9H5Z6"/>
<dbReference type="TreeFam" id="TF328699"/>
<dbReference type="PathwayCommons" id="Q9H5Z6"/>
<dbReference type="SignaLink" id="Q9H5Z6"/>
<dbReference type="BioGRID-ORCS" id="79843">
    <property type="hits" value="24 hits in 1156 CRISPR screens"/>
</dbReference>
<dbReference type="GenomeRNAi" id="79843"/>
<dbReference type="Pharos" id="Q9H5Z6">
    <property type="development level" value="Tdark"/>
</dbReference>
<dbReference type="PRO" id="PR:Q9H5Z6"/>
<dbReference type="Proteomes" id="UP000005640">
    <property type="component" value="Chromosome 2"/>
</dbReference>
<dbReference type="RNAct" id="Q9H5Z6">
    <property type="molecule type" value="protein"/>
</dbReference>
<dbReference type="Bgee" id="ENSG00000124019">
    <property type="expression patterns" value="Expressed in primordial germ cell in gonad and 102 other cell types or tissues"/>
</dbReference>
<dbReference type="GO" id="GO:0005739">
    <property type="term" value="C:mitochondrion"/>
    <property type="evidence" value="ECO:0000314"/>
    <property type="project" value="HPA"/>
</dbReference>
<dbReference type="GO" id="GO:0005654">
    <property type="term" value="C:nucleoplasm"/>
    <property type="evidence" value="ECO:0000314"/>
    <property type="project" value="HPA"/>
</dbReference>
<dbReference type="InterPro" id="IPR029380">
    <property type="entry name" value="FAM124"/>
</dbReference>
<dbReference type="InterPro" id="IPR046365">
    <property type="entry name" value="FAM124_dom"/>
</dbReference>
<dbReference type="PANTHER" id="PTHR14715">
    <property type="entry name" value="FAM124 DOMAIN-CONTAINING PROTEIN-RELATED"/>
    <property type="match status" value="1"/>
</dbReference>
<dbReference type="PANTHER" id="PTHR14715:SF2">
    <property type="entry name" value="PROTEIN FAM124B"/>
    <property type="match status" value="1"/>
</dbReference>
<dbReference type="Pfam" id="PF15067">
    <property type="entry name" value="FAM124"/>
    <property type="match status" value="1"/>
</dbReference>
<comment type="subunit">
    <text evidence="2">Interacts with CHD7 and CHD8.</text>
</comment>
<comment type="interaction">
    <interactant intactId="EBI-741626">
        <id>Q9H5Z6</id>
    </interactant>
    <interactant intactId="EBI-10173507">
        <id>Q6UY14-3</id>
        <label>ADAMTSL4</label>
    </interactant>
    <organismsDiffer>false</organismsDiffer>
    <experiments>3</experiments>
</comment>
<comment type="interaction">
    <interactant intactId="EBI-741626">
        <id>Q9H5Z6</id>
    </interactant>
    <interactant intactId="EBI-517623">
        <id>Q96CA5</id>
        <label>BIRC7</label>
    </interactant>
    <organismsDiffer>false</organismsDiffer>
    <experiments>3</experiments>
</comment>
<comment type="interaction">
    <interactant intactId="EBI-741626">
        <id>Q9H5Z6</id>
    </interactant>
    <interactant intactId="EBI-751319">
        <id>Q9H257</id>
        <label>CARD9</label>
    </interactant>
    <organismsDiffer>false</organismsDiffer>
    <experiments>3</experiments>
</comment>
<comment type="interaction">
    <interactant intactId="EBI-741626">
        <id>Q9H5Z6</id>
    </interactant>
    <interactant intactId="EBI-618309">
        <id>Q08379</id>
        <label>GOLGA2</label>
    </interactant>
    <organismsDiffer>false</organismsDiffer>
    <experiments>3</experiments>
</comment>
<comment type="interaction">
    <interactant intactId="EBI-741626">
        <id>Q9H5Z6</id>
    </interactant>
    <interactant intactId="EBI-2511344">
        <id>Q8NC69</id>
        <label>KCTD6</label>
    </interactant>
    <organismsDiffer>false</organismsDiffer>
    <experiments>3</experiments>
</comment>
<comment type="interaction">
    <interactant intactId="EBI-741626">
        <id>Q9H5Z6</id>
    </interactant>
    <interactant intactId="EBI-4397613">
        <id>Q7L273</id>
        <label>KCTD9</label>
    </interactant>
    <organismsDiffer>false</organismsDiffer>
    <experiments>3</experiments>
</comment>
<comment type="interaction">
    <interactant intactId="EBI-741626">
        <id>Q9H5Z6</id>
    </interactant>
    <interactant intactId="EBI-10181113">
        <id>Q8N8K9</id>
        <label>KIAA1958</label>
    </interactant>
    <organismsDiffer>false</organismsDiffer>
    <experiments>3</experiments>
</comment>
<comment type="interaction">
    <interactant intactId="EBI-741626">
        <id>Q9H5Z6</id>
    </interactant>
    <interactant intactId="EBI-742756">
        <id>P08727</id>
        <label>KRT19</label>
    </interactant>
    <organismsDiffer>false</organismsDiffer>
    <experiments>3</experiments>
</comment>
<comment type="interaction">
    <interactant intactId="EBI-741626">
        <id>Q9H5Z6</id>
    </interactant>
    <interactant intactId="EBI-948001">
        <id>Q15323</id>
        <label>KRT31</label>
    </interactant>
    <organismsDiffer>false</organismsDiffer>
    <experiments>3</experiments>
</comment>
<comment type="interaction">
    <interactant intactId="EBI-741626">
        <id>Q9H5Z6</id>
    </interactant>
    <interactant intactId="EBI-10171697">
        <id>Q6A162</id>
        <label>KRT40</label>
    </interactant>
    <organismsDiffer>false</organismsDiffer>
    <experiments>3</experiments>
</comment>
<comment type="interaction">
    <interactant intactId="EBI-741626">
        <id>Q9H5Z6</id>
    </interactant>
    <interactant intactId="EBI-10172290">
        <id>P60409</id>
        <label>KRTAP10-7</label>
    </interactant>
    <organismsDiffer>false</organismsDiffer>
    <experiments>3</experiments>
</comment>
<comment type="interaction">
    <interactant intactId="EBI-741626">
        <id>Q9H5Z6</id>
    </interactant>
    <interactant intactId="EBI-10172052">
        <id>P60411</id>
        <label>KRTAP10-9</label>
    </interactant>
    <organismsDiffer>false</organismsDiffer>
    <experiments>3</experiments>
</comment>
<comment type="interaction">
    <interactant intactId="EBI-741626">
        <id>Q9H5Z6</id>
    </interactant>
    <interactant intactId="EBI-3958099">
        <id>P26371</id>
        <label>KRTAP5-9</label>
    </interactant>
    <organismsDiffer>false</organismsDiffer>
    <experiments>3</experiments>
</comment>
<comment type="interaction">
    <interactant intactId="EBI-741626">
        <id>Q9H5Z6</id>
    </interactant>
    <interactant intactId="EBI-741037">
        <id>Q9BRK4</id>
        <label>LZTS2</label>
    </interactant>
    <organismsDiffer>false</organismsDiffer>
    <experiments>3</experiments>
</comment>
<comment type="interaction">
    <interactant intactId="EBI-741626">
        <id>Q9H5Z6</id>
    </interactant>
    <interactant intactId="EBI-724076">
        <id>Q99750</id>
        <label>MDFI</label>
    </interactant>
    <organismsDiffer>false</organismsDiffer>
    <experiments>4</experiments>
</comment>
<comment type="interaction">
    <interactant intactId="EBI-741626">
        <id>Q9H5Z6</id>
    </interactant>
    <interactant intactId="EBI-2340269">
        <id>Q13064</id>
        <label>MKRN3</label>
    </interactant>
    <organismsDiffer>false</organismsDiffer>
    <experiments>3</experiments>
</comment>
<comment type="interaction">
    <interactant intactId="EBI-741626">
        <id>Q9H5Z6</id>
    </interactant>
    <interactant intactId="EBI-945833">
        <id>Q7Z3S9</id>
        <label>NOTCH2NLA</label>
    </interactant>
    <organismsDiffer>false</organismsDiffer>
    <experiments>3</experiments>
</comment>
<comment type="interaction">
    <interactant intactId="EBI-741626">
        <id>Q9H5Z6</id>
    </interactant>
    <interactant intactId="EBI-740322">
        <id>Q93062</id>
        <label>RBPMS</label>
    </interactant>
    <organismsDiffer>false</organismsDiffer>
    <experiments>3</experiments>
</comment>
<comment type="interaction">
    <interactant intactId="EBI-741626">
        <id>Q9H5Z6</id>
    </interactant>
    <interactant intactId="EBI-726876">
        <id>Q6NUQ1</id>
        <label>RINT1</label>
    </interactant>
    <organismsDiffer>false</organismsDiffer>
    <experiments>3</experiments>
</comment>
<comment type="interaction">
    <interactant intactId="EBI-741626">
        <id>Q9H5Z6</id>
    </interactant>
    <interactant intactId="EBI-2212028">
        <id>Q9Y2D8</id>
        <label>SSX2IP</label>
    </interactant>
    <organismsDiffer>false</organismsDiffer>
    <experiments>3</experiments>
</comment>
<comment type="interaction">
    <interactant intactId="EBI-741626">
        <id>Q9H5Z6</id>
    </interactant>
    <interactant intactId="EBI-533224">
        <id>P15884</id>
        <label>TCF4</label>
    </interactant>
    <organismsDiffer>false</organismsDiffer>
    <experiments>3</experiments>
</comment>
<comment type="interaction">
    <interactant intactId="EBI-741626">
        <id>Q9H5Z6</id>
    </interactant>
    <interactant intactId="EBI-717810">
        <id>Q08117</id>
        <label>TLE5</label>
    </interactant>
    <organismsDiffer>false</organismsDiffer>
    <experiments>3</experiments>
</comment>
<comment type="interaction">
    <interactant intactId="EBI-741626">
        <id>Q9H5Z6</id>
    </interactant>
    <interactant intactId="EBI-2130429">
        <id>Q9BYV2</id>
        <label>TRIM54</label>
    </interactant>
    <organismsDiffer>false</organismsDiffer>
    <experiments>3</experiments>
</comment>
<comment type="interaction">
    <interactant intactId="EBI-741626">
        <id>Q9H5Z6</id>
    </interactant>
    <interactant intactId="EBI-739895">
        <id>Q8N6Y0</id>
        <label>USHBP1</label>
    </interactant>
    <organismsDiffer>false</organismsDiffer>
    <experiments>3</experiments>
</comment>
<comment type="interaction">
    <interactant intactId="EBI-30872379">
        <id>Q9H5Z6-1</id>
    </interactant>
    <interactant intactId="EBI-30872315">
        <id>Q9P2D1-1</id>
        <label>CHD7</label>
    </interactant>
    <organismsDiffer>false</organismsDiffer>
    <experiments>2</experiments>
</comment>
<comment type="interaction">
    <interactant intactId="EBI-30872379">
        <id>Q9H5Z6-1</id>
    </interactant>
    <interactant intactId="EBI-4410319">
        <id>Q9HCK8-2</id>
        <label>CHD8</label>
    </interactant>
    <organismsDiffer>false</organismsDiffer>
    <experiments>3</experiments>
</comment>
<comment type="interaction">
    <interactant intactId="EBI-11986315">
        <id>Q9H5Z6-2</id>
    </interactant>
    <interactant intactId="EBI-11743294">
        <id>Q8IZP0-5</id>
        <label>ABI1</label>
    </interactant>
    <organismsDiffer>false</organismsDiffer>
    <experiments>3</experiments>
</comment>
<comment type="interaction">
    <interactant intactId="EBI-11986315">
        <id>Q9H5Z6-2</id>
    </interactant>
    <interactant intactId="EBI-742038">
        <id>Q9P2A4</id>
        <label>ABI3</label>
    </interactant>
    <organismsDiffer>false</organismsDiffer>
    <experiments>3</experiments>
</comment>
<comment type="interaction">
    <interactant intactId="EBI-11986315">
        <id>Q9H5Z6-2</id>
    </interactant>
    <interactant intactId="EBI-2548012">
        <id>Q9H2G9</id>
        <label>BLZF1</label>
    </interactant>
    <organismsDiffer>false</organismsDiffer>
    <experiments>3</experiments>
</comment>
<comment type="interaction">
    <interactant intactId="EBI-11986315">
        <id>Q9H5Z6-2</id>
    </interactant>
    <interactant intactId="EBI-4410319">
        <id>Q9HCK8-2</id>
        <label>CHD8</label>
    </interactant>
    <organismsDiffer>false</organismsDiffer>
    <experiments>2</experiments>
</comment>
<comment type="interaction">
    <interactant intactId="EBI-11986315">
        <id>Q9H5Z6-2</id>
    </interactant>
    <interactant intactId="EBI-3867333">
        <id>A8MQ03</id>
        <label>CYSRT1</label>
    </interactant>
    <organismsDiffer>false</organismsDiffer>
    <experiments>3</experiments>
</comment>
<comment type="interaction">
    <interactant intactId="EBI-11986315">
        <id>Q9H5Z6-2</id>
    </interactant>
    <interactant intactId="EBI-11974185">
        <id>Q494R4-2</id>
        <label>DRC12</label>
    </interactant>
    <organismsDiffer>false</organismsDiffer>
    <experiments>3</experiments>
</comment>
<comment type="interaction">
    <interactant intactId="EBI-11986315">
        <id>Q9H5Z6-2</id>
    </interactant>
    <interactant intactId="EBI-2349927">
        <id>Q5JST6</id>
        <label>EFHC2</label>
    </interactant>
    <organismsDiffer>false</organismsDiffer>
    <experiments>3</experiments>
</comment>
<comment type="interaction">
    <interactant intactId="EBI-11986315">
        <id>Q9H5Z6-2</id>
    </interactant>
    <interactant intactId="EBI-12260294">
        <id>Q9NQ30</id>
        <label>ESM1</label>
    </interactant>
    <organismsDiffer>false</organismsDiffer>
    <experiments>3</experiments>
</comment>
<comment type="interaction">
    <interactant intactId="EBI-11986315">
        <id>Q9H5Z6-2</id>
    </interactant>
    <interactant intactId="EBI-947774">
        <id>O75420</id>
        <label>GIGYF1</label>
    </interactant>
    <organismsDiffer>false</organismsDiffer>
    <experiments>3</experiments>
</comment>
<comment type="interaction">
    <interactant intactId="EBI-11986315">
        <id>Q9H5Z6-2</id>
    </interactant>
    <interactant intactId="EBI-743722">
        <id>Q5VSY0</id>
        <label>GKAP1</label>
    </interactant>
    <organismsDiffer>false</organismsDiffer>
    <experiments>3</experiments>
</comment>
<comment type="interaction">
    <interactant intactId="EBI-11986315">
        <id>Q9H5Z6-2</id>
    </interactant>
    <interactant intactId="EBI-618309">
        <id>Q08379</id>
        <label>GOLGA2</label>
    </interactant>
    <organismsDiffer>false</organismsDiffer>
    <experiments>3</experiments>
</comment>
<comment type="interaction">
    <interactant intactId="EBI-11986315">
        <id>Q9H5Z6-2</id>
    </interactant>
    <interactant intactId="EBI-473189">
        <id>Q96D09</id>
        <label>GPRASP2</label>
    </interactant>
    <organismsDiffer>false</organismsDiffer>
    <experiments>3</experiments>
</comment>
<comment type="interaction">
    <interactant intactId="EBI-11986315">
        <id>Q9H5Z6-2</id>
    </interactant>
    <interactant intactId="EBI-11519926">
        <id>Q6PI77</id>
        <label>GPRASP3</label>
    </interactant>
    <organismsDiffer>false</organismsDiffer>
    <experiments>3</experiments>
</comment>
<comment type="interaction">
    <interactant intactId="EBI-11986315">
        <id>Q9H5Z6-2</id>
    </interactant>
    <interactant intactId="EBI-11991632">
        <id>Q14451-3</id>
        <label>GRB7</label>
    </interactant>
    <organismsDiffer>false</organismsDiffer>
    <experiments>3</experiments>
</comment>
<comment type="interaction">
    <interactant intactId="EBI-11986315">
        <id>Q9H5Z6-2</id>
    </interactant>
    <interactant intactId="EBI-7116203">
        <id>O75031</id>
        <label>HSF2BP</label>
    </interactant>
    <organismsDiffer>false</organismsDiffer>
    <experiments>3</experiments>
</comment>
<comment type="interaction">
    <interactant intactId="EBI-11986315">
        <id>Q9H5Z6-2</id>
    </interactant>
    <interactant intactId="EBI-8638439">
        <id>Q8IYA8</id>
        <label>IHO1</label>
    </interactant>
    <organismsDiffer>false</organismsDiffer>
    <experiments>3</experiments>
</comment>
<comment type="interaction">
    <interactant intactId="EBI-11986315">
        <id>Q9H5Z6-2</id>
    </interactant>
    <interactant intactId="EBI-747204">
        <id>Q9UKT9</id>
        <label>IKZF3</label>
    </interactant>
    <organismsDiffer>false</organismsDiffer>
    <experiments>3</experiments>
</comment>
<comment type="interaction">
    <interactant intactId="EBI-11986315">
        <id>Q9H5Z6-2</id>
    </interactant>
    <interactant intactId="EBI-10258659">
        <id>Q86U28</id>
        <label>ISCA2</label>
    </interactant>
    <organismsDiffer>false</organismsDiffer>
    <experiments>3</experiments>
</comment>
<comment type="interaction">
    <interactant intactId="EBI-11986315">
        <id>Q9H5Z6-2</id>
    </interactant>
    <interactant intactId="EBI-948001">
        <id>Q15323</id>
        <label>KRT31</label>
    </interactant>
    <organismsDiffer>false</organismsDiffer>
    <experiments>3</experiments>
</comment>
<comment type="interaction">
    <interactant intactId="EBI-11986315">
        <id>Q9H5Z6-2</id>
    </interactant>
    <interactant intactId="EBI-11741292">
        <id>Q9BYS1</id>
        <label>KRTAP1-5</label>
    </interactant>
    <organismsDiffer>false</organismsDiffer>
    <experiments>3</experiments>
</comment>
<comment type="interaction">
    <interactant intactId="EBI-11986315">
        <id>Q9H5Z6-2</id>
    </interactant>
    <interactant intactId="EBI-1043191">
        <id>Q9BYQ3</id>
        <label>KRTAP9-3</label>
    </interactant>
    <organismsDiffer>false</organismsDiffer>
    <experiments>3</experiments>
</comment>
<comment type="interaction">
    <interactant intactId="EBI-11986315">
        <id>Q9H5Z6-2</id>
    </interactant>
    <interactant intactId="EBI-12039345">
        <id>Q9UBR4-2</id>
        <label>LHX3</label>
    </interactant>
    <organismsDiffer>false</organismsDiffer>
    <experiments>3</experiments>
</comment>
<comment type="interaction">
    <interactant intactId="EBI-11986315">
        <id>Q9H5Z6-2</id>
    </interactant>
    <interactant intactId="EBI-12516603">
        <id>Q8WWY6</id>
        <label>MBD3L1</label>
    </interactant>
    <organismsDiffer>false</organismsDiffer>
    <experiments>3</experiments>
</comment>
<comment type="interaction">
    <interactant intactId="EBI-11986315">
        <id>Q9H5Z6-2</id>
    </interactant>
    <interactant intactId="EBI-2548751">
        <id>Q8TD10</id>
        <label>MIPOL1</label>
    </interactant>
    <organismsDiffer>false</organismsDiffer>
    <experiments>3</experiments>
</comment>
<comment type="interaction">
    <interactant intactId="EBI-11986315">
        <id>Q9H5Z6-2</id>
    </interactant>
    <interactant intactId="EBI-11522433">
        <id>Q5JR59-3</id>
        <label>MTUS2</label>
    </interactant>
    <organismsDiffer>false</organismsDiffer>
    <experiments>4</experiments>
</comment>
<comment type="interaction">
    <interactant intactId="EBI-11986315">
        <id>Q9H5Z6-2</id>
    </interactant>
    <interactant intactId="EBI-17491620">
        <id>P13349</id>
        <label>MYF5</label>
    </interactant>
    <organismsDiffer>false</organismsDiffer>
    <experiments>3</experiments>
</comment>
<comment type="interaction">
    <interactant intactId="EBI-11986315">
        <id>Q9H5Z6-2</id>
    </interactant>
    <interactant intactId="EBI-743949">
        <id>O95544</id>
        <label>NADK</label>
    </interactant>
    <organismsDiffer>false</organismsDiffer>
    <experiments>3</experiments>
</comment>
<comment type="interaction">
    <interactant intactId="EBI-11986315">
        <id>Q9H5Z6-2</id>
    </interactant>
    <interactant intactId="EBI-6873025">
        <id>Q86UC2</id>
        <label>RSPH3</label>
    </interactant>
    <organismsDiffer>false</organismsDiffer>
    <experiments>3</experiments>
</comment>
<comment type="interaction">
    <interactant intactId="EBI-11986315">
        <id>Q9H5Z6-2</id>
    </interactant>
    <interactant intactId="EBI-2009297">
        <id>Q6ZU15</id>
        <label>SEPTIN14</label>
    </interactant>
    <organismsDiffer>false</organismsDiffer>
    <experiments>3</experiments>
</comment>
<comment type="interaction">
    <interactant intactId="EBI-11986315">
        <id>Q9H5Z6-2</id>
    </interactant>
    <interactant intactId="EBI-19952306">
        <id>O14492-2</id>
        <label>SH2B2</label>
    </interactant>
    <organismsDiffer>false</organismsDiffer>
    <experiments>3</experiments>
</comment>
<comment type="interaction">
    <interactant intactId="EBI-11986315">
        <id>Q9H5Z6-2</id>
    </interactant>
    <interactant intactId="EBI-10713842">
        <id>Q8TDD2</id>
        <label>SP7</label>
    </interactant>
    <organismsDiffer>false</organismsDiffer>
    <experiments>3</experiments>
</comment>
<comment type="interaction">
    <interactant intactId="EBI-11986315">
        <id>Q9H5Z6-2</id>
    </interactant>
    <interactant intactId="EBI-11741437">
        <id>Q08117-2</id>
        <label>TLE5</label>
    </interactant>
    <organismsDiffer>false</organismsDiffer>
    <experiments>3</experiments>
</comment>
<comment type="interaction">
    <interactant intactId="EBI-11986315">
        <id>Q9H5Z6-2</id>
    </interactant>
    <interactant intactId="EBI-355744">
        <id>Q12933</id>
        <label>TRAF2</label>
    </interactant>
    <organismsDiffer>false</organismsDiffer>
    <experiments>3</experiments>
</comment>
<comment type="interaction">
    <interactant intactId="EBI-11986315">
        <id>Q9H5Z6-2</id>
    </interactant>
    <interactant intactId="EBI-5235829">
        <id>Q8IWZ5</id>
        <label>TRIM42</label>
    </interactant>
    <organismsDiffer>false</organismsDiffer>
    <experiments>3</experiments>
</comment>
<comment type="interaction">
    <interactant intactId="EBI-11986315">
        <id>Q9H5Z6-2</id>
    </interactant>
    <interactant intactId="EBI-2340370">
        <id>Q9BZR9</id>
        <label>TRIM8</label>
    </interactant>
    <organismsDiffer>false</organismsDiffer>
    <experiments>3</experiments>
</comment>
<comment type="interaction">
    <interactant intactId="EBI-11986315">
        <id>Q9H5Z6-2</id>
    </interactant>
    <interactant intactId="EBI-720828">
        <id>Q9C026</id>
        <label>TRIM9</label>
    </interactant>
    <organismsDiffer>false</organismsDiffer>
    <experiments>3</experiments>
</comment>
<comment type="interaction">
    <interactant intactId="EBI-11986315">
        <id>Q9H5Z6-2</id>
    </interactant>
    <interactant intactId="EBI-11975223">
        <id>Q70EL1-9</id>
        <label>USP54</label>
    </interactant>
    <organismsDiffer>false</organismsDiffer>
    <experiments>3</experiments>
</comment>
<comment type="interaction">
    <interactant intactId="EBI-11986315">
        <id>Q9H5Z6-2</id>
    </interactant>
    <interactant intactId="EBI-7705033">
        <id>Q9BRX9</id>
        <label>WDR83</label>
    </interactant>
    <organismsDiffer>false</organismsDiffer>
    <experiments>3</experiments>
</comment>
<comment type="interaction">
    <interactant intactId="EBI-11986315">
        <id>Q9H5Z6-2</id>
    </interactant>
    <interactant intactId="EBI-740037">
        <id>O96006</id>
        <label>ZBED1</label>
    </interactant>
    <organismsDiffer>false</organismsDiffer>
    <experiments>3</experiments>
</comment>
<comment type="interaction">
    <interactant intactId="EBI-11986315">
        <id>Q9H5Z6-2</id>
    </interactant>
    <interactant intactId="EBI-12310821">
        <id>Q9UC07-2</id>
        <label>ZNF69</label>
    </interactant>
    <organismsDiffer>false</organismsDiffer>
    <experiments>3</experiments>
</comment>
<comment type="interaction">
    <interactant intactId="EBI-11986315">
        <id>Q9H5Z6-2</id>
    </interactant>
    <interactant intactId="EBI-10251462">
        <id>Q6NX45</id>
        <label>ZNF774</label>
    </interactant>
    <organismsDiffer>false</organismsDiffer>
    <experiments>3</experiments>
</comment>
<comment type="interaction">
    <interactant intactId="EBI-11986315">
        <id>Q9H5Z6-2</id>
    </interactant>
    <interactant intactId="EBI-527853">
        <id>Q9UGI0</id>
        <label>ZRANB1</label>
    </interactant>
    <organismsDiffer>false</organismsDiffer>
    <experiments>3</experiments>
</comment>
<comment type="subcellular location">
    <subcellularLocation>
        <location evidence="2">Nucleus</location>
    </subcellularLocation>
</comment>
<comment type="alternative products">
    <event type="alternative splicing"/>
    <isoform>
        <id>Q9H5Z6-1</id>
        <name>1</name>
        <sequence type="displayed"/>
    </isoform>
    <isoform>
        <id>Q9H5Z6-2</id>
        <name>2</name>
        <sequence type="described" ref="VSP_025042 VSP_025043"/>
    </isoform>
</comment>
<comment type="similarity">
    <text evidence="5">Belongs to the FAM124 family.</text>
</comment>
<comment type="sequence caution" evidence="5">
    <conflict type="frameshift">
        <sequence resource="EMBL-CDS" id="BAB15471"/>
    </conflict>
</comment>